<sequence>MPTPSMEDYIEQIYLLIDEKGYARVSDIAEALSVHPSSVTKMVQKLDKDEYLIYEKYRGLVLTAKGKKIGERLVYRHELLEQFMRIIGVDESKIYNDVEGIEHHLSWEAIDRIGDLVQYFEEDDFRIETLRAVQKANGEQSK</sequence>
<keyword id="KW-0010">Activator</keyword>
<keyword id="KW-0963">Cytoplasm</keyword>
<keyword id="KW-0238">DNA-binding</keyword>
<keyword id="KW-0464">Manganese</keyword>
<keyword id="KW-0479">Metal-binding</keyword>
<keyword id="KW-0678">Repressor</keyword>
<keyword id="KW-0804">Transcription</keyword>
<keyword id="KW-0805">Transcription regulation</keyword>
<reference key="1">
    <citation type="journal article" date="2008" name="Chem. Biol. Interact.">
        <title>Extending the Bacillus cereus group genomics to putative food-borne pathogens of different toxicity.</title>
        <authorList>
            <person name="Lapidus A."/>
            <person name="Goltsman E."/>
            <person name="Auger S."/>
            <person name="Galleron N."/>
            <person name="Segurens B."/>
            <person name="Dossat C."/>
            <person name="Land M.L."/>
            <person name="Broussolle V."/>
            <person name="Brillard J."/>
            <person name="Guinebretiere M.-H."/>
            <person name="Sanchis V."/>
            <person name="Nguen-the C."/>
            <person name="Lereclus D."/>
            <person name="Richardson P."/>
            <person name="Wincker P."/>
            <person name="Weissenbach J."/>
            <person name="Ehrlich S.D."/>
            <person name="Sorokin A."/>
        </authorList>
    </citation>
    <scope>NUCLEOTIDE SEQUENCE [LARGE SCALE GENOMIC DNA]</scope>
    <source>
        <strain>DSM 22905 / CIP 110041 / 391-98 / NVH 391-98</strain>
    </source>
</reference>
<accession>A7GSM1</accession>
<comment type="function">
    <text evidence="1">Central regulator of manganese homeostasis.</text>
</comment>
<comment type="activity regulation">
    <text evidence="1">DNA binding is strongly activated by Mn(2+).</text>
</comment>
<comment type="subunit">
    <text evidence="1">Homodimer.</text>
</comment>
<comment type="subcellular location">
    <subcellularLocation>
        <location evidence="1">Cytoplasm</location>
    </subcellularLocation>
</comment>
<comment type="similarity">
    <text evidence="1">Belongs to the DtxR/MntR family.</text>
</comment>
<organism>
    <name type="scientific">Bacillus cytotoxicus (strain DSM 22905 / CIP 110041 / 391-98 / NVH 391-98)</name>
    <dbReference type="NCBI Taxonomy" id="315749"/>
    <lineage>
        <taxon>Bacteria</taxon>
        <taxon>Bacillati</taxon>
        <taxon>Bacillota</taxon>
        <taxon>Bacilli</taxon>
        <taxon>Bacillales</taxon>
        <taxon>Bacillaceae</taxon>
        <taxon>Bacillus</taxon>
        <taxon>Bacillus cereus group</taxon>
    </lineage>
</organism>
<protein>
    <recommendedName>
        <fullName evidence="1">HTH-type transcriptional regulator MntR</fullName>
    </recommendedName>
    <alternativeName>
        <fullName evidence="1">Manganese transport regulator</fullName>
    </alternativeName>
</protein>
<proteinExistence type="inferred from homology"/>
<feature type="chain" id="PRO_1000083338" description="HTH-type transcriptional regulator MntR">
    <location>
        <begin position="1"/>
        <end position="142"/>
    </location>
</feature>
<feature type="domain" description="HTH dtxR-type" evidence="1">
    <location>
        <begin position="1"/>
        <end position="63"/>
    </location>
</feature>
<feature type="binding site" evidence="1">
    <location>
        <position position="8"/>
    </location>
    <ligand>
        <name>Mn(2+)</name>
        <dbReference type="ChEBI" id="CHEBI:29035"/>
        <label>1</label>
    </ligand>
</feature>
<feature type="binding site" evidence="1">
    <location>
        <position position="11"/>
    </location>
    <ligand>
        <name>Mn(2+)</name>
        <dbReference type="ChEBI" id="CHEBI:29035"/>
        <label>2</label>
    </ligand>
</feature>
<feature type="binding site" evidence="1">
    <location>
        <position position="77"/>
    </location>
    <ligand>
        <name>Mn(2+)</name>
        <dbReference type="ChEBI" id="CHEBI:29035"/>
        <label>2</label>
    </ligand>
</feature>
<feature type="binding site" evidence="1">
    <location>
        <position position="99"/>
    </location>
    <ligand>
        <name>Mn(2+)</name>
        <dbReference type="ChEBI" id="CHEBI:29035"/>
        <label>1</label>
    </ligand>
</feature>
<feature type="binding site" evidence="1">
    <location>
        <position position="99"/>
    </location>
    <ligand>
        <name>Mn(2+)</name>
        <dbReference type="ChEBI" id="CHEBI:29035"/>
        <label>2</label>
    </ligand>
</feature>
<feature type="binding site" evidence="1">
    <location>
        <position position="102"/>
    </location>
    <ligand>
        <name>Mn(2+)</name>
        <dbReference type="ChEBI" id="CHEBI:29035"/>
        <label>1</label>
    </ligand>
</feature>
<feature type="binding site" evidence="1">
    <location>
        <position position="102"/>
    </location>
    <ligand>
        <name>Mn(2+)</name>
        <dbReference type="ChEBI" id="CHEBI:29035"/>
        <label>2</label>
    </ligand>
</feature>
<feature type="binding site" evidence="1">
    <location>
        <position position="103"/>
    </location>
    <ligand>
        <name>Mn(2+)</name>
        <dbReference type="ChEBI" id="CHEBI:29035"/>
        <label>1</label>
    </ligand>
</feature>
<gene>
    <name evidence="1" type="primary">mntR</name>
    <name type="ordered locus">Bcer98_2897</name>
</gene>
<dbReference type="EMBL" id="CP000764">
    <property type="protein sequence ID" value="ABS23129.1"/>
    <property type="molecule type" value="Genomic_DNA"/>
</dbReference>
<dbReference type="RefSeq" id="WP_012095357.1">
    <property type="nucleotide sequence ID" value="NC_009674.1"/>
</dbReference>
<dbReference type="SMR" id="A7GSM1"/>
<dbReference type="STRING" id="315749.Bcer98_2897"/>
<dbReference type="GeneID" id="33898150"/>
<dbReference type="KEGG" id="bcy:Bcer98_2897"/>
<dbReference type="eggNOG" id="COG1321">
    <property type="taxonomic scope" value="Bacteria"/>
</dbReference>
<dbReference type="HOGENOM" id="CLU_069532_3_0_9"/>
<dbReference type="OrthoDB" id="9791355at2"/>
<dbReference type="Proteomes" id="UP000002300">
    <property type="component" value="Chromosome"/>
</dbReference>
<dbReference type="GO" id="GO:0005737">
    <property type="term" value="C:cytoplasm"/>
    <property type="evidence" value="ECO:0007669"/>
    <property type="project" value="UniProtKB-SubCell"/>
</dbReference>
<dbReference type="GO" id="GO:0003677">
    <property type="term" value="F:DNA binding"/>
    <property type="evidence" value="ECO:0007669"/>
    <property type="project" value="UniProtKB-KW"/>
</dbReference>
<dbReference type="GO" id="GO:0003700">
    <property type="term" value="F:DNA-binding transcription factor activity"/>
    <property type="evidence" value="ECO:0007669"/>
    <property type="project" value="UniProtKB-UniRule"/>
</dbReference>
<dbReference type="GO" id="GO:0030145">
    <property type="term" value="F:manganese ion binding"/>
    <property type="evidence" value="ECO:0007669"/>
    <property type="project" value="UniProtKB-UniRule"/>
</dbReference>
<dbReference type="GO" id="GO:0046983">
    <property type="term" value="F:protein dimerization activity"/>
    <property type="evidence" value="ECO:0007669"/>
    <property type="project" value="InterPro"/>
</dbReference>
<dbReference type="GO" id="GO:0030026">
    <property type="term" value="P:intracellular manganese ion homeostasis"/>
    <property type="evidence" value="ECO:0007669"/>
    <property type="project" value="UniProtKB-UniRule"/>
</dbReference>
<dbReference type="FunFam" id="1.10.10.10:FF:000189">
    <property type="entry name" value="HTH-type transcriptional regulator MntR"/>
    <property type="match status" value="1"/>
</dbReference>
<dbReference type="FunFam" id="1.10.60.10:FF:000003">
    <property type="entry name" value="HTH-type transcriptional regulator MntR"/>
    <property type="match status" value="1"/>
</dbReference>
<dbReference type="Gene3D" id="1.10.60.10">
    <property type="entry name" value="Iron dependent repressor, metal binding and dimerisation domain"/>
    <property type="match status" value="1"/>
</dbReference>
<dbReference type="Gene3D" id="1.10.10.10">
    <property type="entry name" value="Winged helix-like DNA-binding domain superfamily/Winged helix DNA-binding domain"/>
    <property type="match status" value="1"/>
</dbReference>
<dbReference type="HAMAP" id="MF_00732">
    <property type="entry name" value="HTH_MntR"/>
    <property type="match status" value="1"/>
</dbReference>
<dbReference type="InterPro" id="IPR050536">
    <property type="entry name" value="DtxR_MntR_Metal-Reg"/>
</dbReference>
<dbReference type="InterPro" id="IPR001367">
    <property type="entry name" value="Fe_dep_repressor"/>
</dbReference>
<dbReference type="InterPro" id="IPR036421">
    <property type="entry name" value="Fe_dep_repressor_sf"/>
</dbReference>
<dbReference type="InterPro" id="IPR022687">
    <property type="entry name" value="HTH_DTXR"/>
</dbReference>
<dbReference type="InterPro" id="IPR022897">
    <property type="entry name" value="HTH_tscrpt_reg_MntR"/>
</dbReference>
<dbReference type="InterPro" id="IPR022689">
    <property type="entry name" value="Iron_dep_repressor"/>
</dbReference>
<dbReference type="InterPro" id="IPR036388">
    <property type="entry name" value="WH-like_DNA-bd_sf"/>
</dbReference>
<dbReference type="InterPro" id="IPR036390">
    <property type="entry name" value="WH_DNA-bd_sf"/>
</dbReference>
<dbReference type="NCBIfam" id="NF003025">
    <property type="entry name" value="PRK03902.1"/>
    <property type="match status" value="1"/>
</dbReference>
<dbReference type="PANTHER" id="PTHR33238">
    <property type="entry name" value="IRON (METAL) DEPENDENT REPRESSOR, DTXR FAMILY"/>
    <property type="match status" value="1"/>
</dbReference>
<dbReference type="PANTHER" id="PTHR33238:SF11">
    <property type="entry name" value="TRANSCRIPTIONAL REGULATOR MNTR"/>
    <property type="match status" value="1"/>
</dbReference>
<dbReference type="Pfam" id="PF02742">
    <property type="entry name" value="Fe_dep_repr_C"/>
    <property type="match status" value="1"/>
</dbReference>
<dbReference type="Pfam" id="PF01325">
    <property type="entry name" value="Fe_dep_repress"/>
    <property type="match status" value="1"/>
</dbReference>
<dbReference type="SMART" id="SM00529">
    <property type="entry name" value="HTH_DTXR"/>
    <property type="match status" value="1"/>
</dbReference>
<dbReference type="SUPFAM" id="SSF47979">
    <property type="entry name" value="Iron-dependent repressor protein, dimerization domain"/>
    <property type="match status" value="1"/>
</dbReference>
<dbReference type="SUPFAM" id="SSF46785">
    <property type="entry name" value="Winged helix' DNA-binding domain"/>
    <property type="match status" value="1"/>
</dbReference>
<dbReference type="PROSITE" id="PS50944">
    <property type="entry name" value="HTH_DTXR"/>
    <property type="match status" value="1"/>
</dbReference>
<evidence type="ECO:0000255" key="1">
    <source>
        <dbReference type="HAMAP-Rule" id="MF_00732"/>
    </source>
</evidence>
<name>MNTR_BACCN</name>